<evidence type="ECO:0000255" key="1"/>
<evidence type="ECO:0000256" key="2">
    <source>
        <dbReference type="SAM" id="MobiDB-lite"/>
    </source>
</evidence>
<evidence type="ECO:0000269" key="3">
    <source>
    </source>
</evidence>
<evidence type="ECO:0000305" key="4"/>
<comment type="function">
    <text evidence="3">Multidrug resistance transporter involved in resistance and adaptation to quinidine and ketoconazole.</text>
</comment>
<comment type="subcellular location">
    <subcellularLocation>
        <location evidence="3">Cell membrane</location>
        <topology evidence="3">Multi-pass membrane protein</topology>
    </subcellularLocation>
</comment>
<comment type="similarity">
    <text evidence="4">Belongs to the major facilitator superfamily. CAR1 family.</text>
</comment>
<proteinExistence type="evidence at protein level"/>
<keyword id="KW-1003">Cell membrane</keyword>
<keyword id="KW-0472">Membrane</keyword>
<keyword id="KW-1185">Reference proteome</keyword>
<keyword id="KW-0812">Transmembrane</keyword>
<keyword id="KW-1133">Transmembrane helix</keyword>
<keyword id="KW-0813">Transport</keyword>
<gene>
    <name type="primary">QDR1</name>
    <name type="ordered locus">YIL120W</name>
</gene>
<feature type="chain" id="PRO_0000173441" description="Quinidine resistance protein 1">
    <location>
        <begin position="1"/>
        <end position="563"/>
    </location>
</feature>
<feature type="topological domain" description="Cytoplasmic" evidence="1">
    <location>
        <begin position="1"/>
        <end position="75"/>
    </location>
</feature>
<feature type="transmembrane region" description="Helical" evidence="1">
    <location>
        <begin position="76"/>
        <end position="96"/>
    </location>
</feature>
<feature type="topological domain" description="Extracellular" evidence="1">
    <location>
        <begin position="97"/>
        <end position="108"/>
    </location>
</feature>
<feature type="transmembrane region" description="Helical" evidence="1">
    <location>
        <begin position="109"/>
        <end position="129"/>
    </location>
</feature>
<feature type="topological domain" description="Cytoplasmic" evidence="1">
    <location>
        <begin position="130"/>
        <end position="135"/>
    </location>
</feature>
<feature type="transmembrane region" description="Helical" evidence="1">
    <location>
        <begin position="136"/>
        <end position="156"/>
    </location>
</feature>
<feature type="topological domain" description="Extracellular" evidence="1">
    <location>
        <begin position="157"/>
        <end position="165"/>
    </location>
</feature>
<feature type="transmembrane region" description="Helical" evidence="1">
    <location>
        <begin position="166"/>
        <end position="186"/>
    </location>
</feature>
<feature type="topological domain" description="Cytoplasmic" evidence="1">
    <location>
        <begin position="187"/>
        <end position="195"/>
    </location>
</feature>
<feature type="transmembrane region" description="Helical" evidence="1">
    <location>
        <begin position="196"/>
        <end position="216"/>
    </location>
</feature>
<feature type="topological domain" description="Extracellular" evidence="1">
    <location>
        <begin position="217"/>
        <end position="224"/>
    </location>
</feature>
<feature type="transmembrane region" description="Helical" evidence="1">
    <location>
        <begin position="225"/>
        <end position="245"/>
    </location>
</feature>
<feature type="topological domain" description="Cytoplasmic" evidence="1">
    <location>
        <begin position="246"/>
        <end position="296"/>
    </location>
</feature>
<feature type="transmembrane region" description="Helical" evidence="1">
    <location>
        <begin position="297"/>
        <end position="317"/>
    </location>
</feature>
<feature type="topological domain" description="Extracellular" evidence="1">
    <location>
        <begin position="318"/>
        <end position="341"/>
    </location>
</feature>
<feature type="transmembrane region" description="Helical" evidence="1">
    <location>
        <begin position="342"/>
        <end position="362"/>
    </location>
</feature>
<feature type="topological domain" description="Cytoplasmic" evidence="1">
    <location>
        <begin position="363"/>
        <end position="421"/>
    </location>
</feature>
<feature type="transmembrane region" description="Helical" evidence="1">
    <location>
        <begin position="422"/>
        <end position="442"/>
    </location>
</feature>
<feature type="topological domain" description="Extracellular" evidence="1">
    <location>
        <begin position="443"/>
        <end position="445"/>
    </location>
</feature>
<feature type="transmembrane region" description="Helical" evidence="1">
    <location>
        <begin position="446"/>
        <end position="466"/>
    </location>
</feature>
<feature type="topological domain" description="Cytoplasmic" evidence="1">
    <location>
        <begin position="467"/>
        <end position="481"/>
    </location>
</feature>
<feature type="transmembrane region" description="Helical" evidence="1">
    <location>
        <begin position="482"/>
        <end position="502"/>
    </location>
</feature>
<feature type="topological domain" description="Extracellular" evidence="1">
    <location>
        <begin position="503"/>
        <end position="511"/>
    </location>
</feature>
<feature type="transmembrane region" description="Helical" evidence="1">
    <location>
        <begin position="512"/>
        <end position="532"/>
    </location>
</feature>
<feature type="topological domain" description="Cytoplasmic" evidence="1">
    <location>
        <begin position="533"/>
        <end position="563"/>
    </location>
</feature>
<feature type="region of interest" description="Disordered" evidence="2">
    <location>
        <begin position="1"/>
        <end position="50"/>
    </location>
</feature>
<feature type="compositionally biased region" description="Polar residues" evidence="2">
    <location>
        <begin position="1"/>
        <end position="10"/>
    </location>
</feature>
<feature type="compositionally biased region" description="Low complexity" evidence="2">
    <location>
        <begin position="23"/>
        <end position="33"/>
    </location>
</feature>
<feature type="compositionally biased region" description="Basic and acidic residues" evidence="2">
    <location>
        <begin position="39"/>
        <end position="49"/>
    </location>
</feature>
<protein>
    <recommendedName>
        <fullName>Quinidine resistance protein 1</fullName>
    </recommendedName>
</protein>
<organism>
    <name type="scientific">Saccharomyces cerevisiae (strain ATCC 204508 / S288c)</name>
    <name type="common">Baker's yeast</name>
    <dbReference type="NCBI Taxonomy" id="559292"/>
    <lineage>
        <taxon>Eukaryota</taxon>
        <taxon>Fungi</taxon>
        <taxon>Dikarya</taxon>
        <taxon>Ascomycota</taxon>
        <taxon>Saccharomycotina</taxon>
        <taxon>Saccharomycetes</taxon>
        <taxon>Saccharomycetales</taxon>
        <taxon>Saccharomycetaceae</taxon>
        <taxon>Saccharomyces</taxon>
    </lineage>
</organism>
<sequence length="563" mass="61759">MTKQQTSVMRNASIAKEEREGSDNNNVDRSSSDAISDNDAERSNSHSEIDNESNFDMVPYSRFSHKQKMLLVVQCAFTGFFSTVAGSIYYPVLTIIERKFNITEELANVTIVVYFIFQGVAPSIMGGLADTFGRRPIVLWAILAYFCACIGLACAHNYAQILALRCLQAAGISPVIAINSGIMGDVTTKVERGGYVGLVAGFQVVGTAFGALIGAGLSSKWGWRAIFWFLAIGSGICLVFSTLLMPETKRTLVGNGSVTPRSFLNRSLILHVGSVKKTLHLDDPDPETLEPRTSVDFLAPLKILHIREIDILLSIAGLQFSTWTTHQTALTIVLSKKYNLSVAKIGLCFLPAGISTLTSIISAGRYLNWSYRTRKVKYNRWIKEQELQLMEKYKGDKNKVAELIHSNSHYAFNLVEARLHPAFVTLLLSSIGFTAFGWCISVKTPLAAVLCTSAFASLFSNCILTFSTTLIVDLFPSKASTATGCLNLFRCLLSAIFIAALTKMVEKMRYGGVFTFLSAITSSSSLLLFYLLKNGKQLSFDRIRANDKSAGRSVGKNSEKVST</sequence>
<reference key="1">
    <citation type="journal article" date="1997" name="Nature">
        <title>The nucleotide sequence of Saccharomyces cerevisiae chromosome IX.</title>
        <authorList>
            <person name="Churcher C.M."/>
            <person name="Bowman S."/>
            <person name="Badcock K."/>
            <person name="Bankier A.T."/>
            <person name="Brown D."/>
            <person name="Chillingworth T."/>
            <person name="Connor R."/>
            <person name="Devlin K."/>
            <person name="Gentles S."/>
            <person name="Hamlin N."/>
            <person name="Harris D.E."/>
            <person name="Horsnell T."/>
            <person name="Hunt S."/>
            <person name="Jagels K."/>
            <person name="Jones M."/>
            <person name="Lye G."/>
            <person name="Moule S."/>
            <person name="Odell C."/>
            <person name="Pearson D."/>
            <person name="Rajandream M.A."/>
            <person name="Rice P."/>
            <person name="Rowley N."/>
            <person name="Skelton J."/>
            <person name="Smith V."/>
            <person name="Walsh S.V."/>
            <person name="Whitehead S."/>
            <person name="Barrell B.G."/>
        </authorList>
    </citation>
    <scope>NUCLEOTIDE SEQUENCE [LARGE SCALE GENOMIC DNA]</scope>
    <source>
        <strain>ATCC 204508 / S288c</strain>
    </source>
</reference>
<reference key="2">
    <citation type="journal article" date="2014" name="G3 (Bethesda)">
        <title>The reference genome sequence of Saccharomyces cerevisiae: Then and now.</title>
        <authorList>
            <person name="Engel S.R."/>
            <person name="Dietrich F.S."/>
            <person name="Fisk D.G."/>
            <person name="Binkley G."/>
            <person name="Balakrishnan R."/>
            <person name="Costanzo M.C."/>
            <person name="Dwight S.S."/>
            <person name="Hitz B.C."/>
            <person name="Karra K."/>
            <person name="Nash R.S."/>
            <person name="Weng S."/>
            <person name="Wong E.D."/>
            <person name="Lloyd P."/>
            <person name="Skrzypek M.S."/>
            <person name="Miyasato S.R."/>
            <person name="Simison M."/>
            <person name="Cherry J.M."/>
        </authorList>
    </citation>
    <scope>GENOME REANNOTATION</scope>
    <source>
        <strain>ATCC 204508 / S288c</strain>
    </source>
</reference>
<reference key="3">
    <citation type="journal article" date="2001" name="Antimicrob. Agents Chemother.">
        <title>Resistance and adaptation to quinidine in Saccharomyces cerevisiae: role of QDR1 (YIL120w), encoding a plasma membrane transporter of the major facilitator superfamily required for multidrug resistance.</title>
        <authorList>
            <person name="Nunes P.A."/>
            <person name="Tenreiro S."/>
            <person name="Sa-Correia I."/>
        </authorList>
    </citation>
    <scope>FUNCTION</scope>
    <scope>SUBCELLULAR LOCATION</scope>
</reference>
<reference key="4">
    <citation type="journal article" date="2006" name="Proc. Natl. Acad. Sci. U.S.A.">
        <title>A global topology map of the Saccharomyces cerevisiae membrane proteome.</title>
        <authorList>
            <person name="Kim H."/>
            <person name="Melen K."/>
            <person name="Oesterberg M."/>
            <person name="von Heijne G."/>
        </authorList>
    </citation>
    <scope>TOPOLOGY [LARGE SCALE ANALYSIS]</scope>
    <source>
        <strain>ATCC 208353 / W303-1A</strain>
    </source>
</reference>
<dbReference type="EMBL" id="Z46833">
    <property type="protein sequence ID" value="CAA86872.1"/>
    <property type="molecule type" value="Genomic_DNA"/>
</dbReference>
<dbReference type="EMBL" id="BK006942">
    <property type="protein sequence ID" value="DAA08433.1"/>
    <property type="molecule type" value="Genomic_DNA"/>
</dbReference>
<dbReference type="PIR" id="S49889">
    <property type="entry name" value="S49889"/>
</dbReference>
<dbReference type="RefSeq" id="NP_012146.1">
    <property type="nucleotide sequence ID" value="NM_001179468.1"/>
</dbReference>
<dbReference type="SMR" id="P40475"/>
<dbReference type="BioGRID" id="34871">
    <property type="interactions" value="38"/>
</dbReference>
<dbReference type="DIP" id="DIP-8146N"/>
<dbReference type="FunCoup" id="P40475">
    <property type="interactions" value="45"/>
</dbReference>
<dbReference type="IntAct" id="P40475">
    <property type="interactions" value="1"/>
</dbReference>
<dbReference type="STRING" id="4932.YIL120W"/>
<dbReference type="PaxDb" id="4932-YIL120W"/>
<dbReference type="EnsemblFungi" id="YIL120W_mRNA">
    <property type="protein sequence ID" value="YIL120W"/>
    <property type="gene ID" value="YIL120W"/>
</dbReference>
<dbReference type="GeneID" id="854686"/>
<dbReference type="KEGG" id="sce:YIL120W"/>
<dbReference type="AGR" id="SGD:S000001382"/>
<dbReference type="SGD" id="S000001382">
    <property type="gene designation" value="QDR1"/>
</dbReference>
<dbReference type="VEuPathDB" id="FungiDB:YIL120W"/>
<dbReference type="eggNOG" id="KOG0255">
    <property type="taxonomic scope" value="Eukaryota"/>
</dbReference>
<dbReference type="GeneTree" id="ENSGT00940000176391"/>
<dbReference type="HOGENOM" id="CLU_008455_8_4_1"/>
<dbReference type="InParanoid" id="P40475"/>
<dbReference type="OMA" id="DIHPGKA"/>
<dbReference type="OrthoDB" id="440553at2759"/>
<dbReference type="BioCyc" id="YEAST:G3O-31373-MONOMER"/>
<dbReference type="BioGRID-ORCS" id="854686">
    <property type="hits" value="0 hits in 10 CRISPR screens"/>
</dbReference>
<dbReference type="PRO" id="PR:P40475"/>
<dbReference type="Proteomes" id="UP000002311">
    <property type="component" value="Chromosome IX"/>
</dbReference>
<dbReference type="RNAct" id="P40475">
    <property type="molecule type" value="protein"/>
</dbReference>
<dbReference type="GO" id="GO:0071944">
    <property type="term" value="C:cell periphery"/>
    <property type="evidence" value="ECO:0007005"/>
    <property type="project" value="SGD"/>
</dbReference>
<dbReference type="GO" id="GO:0005886">
    <property type="term" value="C:plasma membrane"/>
    <property type="evidence" value="ECO:0000314"/>
    <property type="project" value="SGD"/>
</dbReference>
<dbReference type="GO" id="GO:0015562">
    <property type="term" value="F:efflux transmembrane transporter activity"/>
    <property type="evidence" value="ECO:0000315"/>
    <property type="project" value="SGD"/>
</dbReference>
<dbReference type="GO" id="GO:0022857">
    <property type="term" value="F:transmembrane transporter activity"/>
    <property type="evidence" value="ECO:0000318"/>
    <property type="project" value="GO_Central"/>
</dbReference>
<dbReference type="GO" id="GO:0030476">
    <property type="term" value="P:ascospore wall assembly"/>
    <property type="evidence" value="ECO:0000316"/>
    <property type="project" value="SGD"/>
</dbReference>
<dbReference type="GO" id="GO:0055085">
    <property type="term" value="P:transmembrane transport"/>
    <property type="evidence" value="ECO:0000315"/>
    <property type="project" value="SGD"/>
</dbReference>
<dbReference type="CDD" id="cd17323">
    <property type="entry name" value="MFS_Tpo1_MDR_like"/>
    <property type="match status" value="1"/>
</dbReference>
<dbReference type="Gene3D" id="1.20.1250.20">
    <property type="entry name" value="MFS general substrate transporter like domains"/>
    <property type="match status" value="1"/>
</dbReference>
<dbReference type="InterPro" id="IPR011701">
    <property type="entry name" value="MFS"/>
</dbReference>
<dbReference type="InterPro" id="IPR020846">
    <property type="entry name" value="MFS_dom"/>
</dbReference>
<dbReference type="InterPro" id="IPR036259">
    <property type="entry name" value="MFS_trans_sf"/>
</dbReference>
<dbReference type="PANTHER" id="PTHR23502">
    <property type="entry name" value="MAJOR FACILITATOR SUPERFAMILY"/>
    <property type="match status" value="1"/>
</dbReference>
<dbReference type="PANTHER" id="PTHR23502:SF51">
    <property type="entry name" value="QUINIDINE RESISTANCE PROTEIN 1-RELATED"/>
    <property type="match status" value="1"/>
</dbReference>
<dbReference type="Pfam" id="PF07690">
    <property type="entry name" value="MFS_1"/>
    <property type="match status" value="1"/>
</dbReference>
<dbReference type="SUPFAM" id="SSF103473">
    <property type="entry name" value="MFS general substrate transporter"/>
    <property type="match status" value="1"/>
</dbReference>
<dbReference type="PROSITE" id="PS50850">
    <property type="entry name" value="MFS"/>
    <property type="match status" value="1"/>
</dbReference>
<accession>P40475</accession>
<accession>D6VVG7</accession>
<name>QDR1_YEAST</name>